<evidence type="ECO:0000255" key="1">
    <source>
        <dbReference type="HAMAP-Rule" id="MF_01016"/>
    </source>
</evidence>
<feature type="chain" id="PRO_1000063249" description="Putative transport protein YidE">
    <location>
        <begin position="1"/>
        <end position="553"/>
    </location>
</feature>
<feature type="transmembrane region" description="Helical" evidence="1">
    <location>
        <begin position="4"/>
        <end position="24"/>
    </location>
</feature>
<feature type="transmembrane region" description="Helical" evidence="1">
    <location>
        <begin position="28"/>
        <end position="48"/>
    </location>
</feature>
<feature type="transmembrane region" description="Helical" evidence="1">
    <location>
        <begin position="65"/>
        <end position="85"/>
    </location>
</feature>
<feature type="transmembrane region" description="Helical" evidence="1">
    <location>
        <begin position="95"/>
        <end position="115"/>
    </location>
</feature>
<feature type="transmembrane region" description="Helical" evidence="1">
    <location>
        <begin position="158"/>
        <end position="178"/>
    </location>
</feature>
<feature type="transmembrane region" description="Helical" evidence="1">
    <location>
        <begin position="371"/>
        <end position="391"/>
    </location>
</feature>
<feature type="transmembrane region" description="Helical" evidence="1">
    <location>
        <begin position="393"/>
        <end position="413"/>
    </location>
</feature>
<feature type="transmembrane region" description="Helical" evidence="1">
    <location>
        <begin position="439"/>
        <end position="459"/>
    </location>
</feature>
<feature type="transmembrane region" description="Helical" evidence="1">
    <location>
        <begin position="464"/>
        <end position="484"/>
    </location>
</feature>
<feature type="transmembrane region" description="Helical" evidence="1">
    <location>
        <begin position="493"/>
        <end position="513"/>
    </location>
</feature>
<feature type="transmembrane region" description="Helical" evidence="1">
    <location>
        <begin position="533"/>
        <end position="553"/>
    </location>
</feature>
<feature type="domain" description="RCK C-terminal 1" evidence="1">
    <location>
        <begin position="191"/>
        <end position="276"/>
    </location>
</feature>
<feature type="domain" description="RCK C-terminal 2" evidence="1">
    <location>
        <begin position="279"/>
        <end position="361"/>
    </location>
</feature>
<sequence length="553" mass="58967">MSDIALTVSILALVAVVGLFIGNVKFRGIGLGIGGVLFGGIIVGHFVSQAGMTLSSDMLHVIQEFGLILFVYTIGIQVGPGFFASLRVSGLRLNLFAVLIVIIGGLVTAILHKLFDIPLPVVLGIFSGAVTNTPALGAGQQILRDLGTPMEMVDQMGMSYAMAYPFGICGILFTMWMLRVIFRVNVETEAQQHESSRTNGGALIRTINIRVENPNLHDLAIKDVPILNGDKIICSRLKREETLKVPSPDTIIQLGDLLHLVGQPADLHNAQLVIGQEVDTSLSTKGTDLRVERVVVTNENVLGKRIRDLHFKERYDVVISRLNRAGVELVASGDISLQFGDILNLVGRPSAIDAVANVLGNAQQKLQQVQMLPVFIGIGLGVLLGSIPVFVPGFPAALKLGLAGGPLIMALILGRIGSIGKLYWFMPPSANLALRELGIVLFLSVVGLKSGGDFVNTLVNGEGLSWIGYGALITAVPLITVGILARMLAKMNYLTMCGMLAGSMTDPPALAFANNLHPTSGAAALSYATVYPLVMFLRIITPQLLAVLFWSIG</sequence>
<protein>
    <recommendedName>
        <fullName evidence="1">Putative transport protein YidE</fullName>
    </recommendedName>
</protein>
<organism>
    <name type="scientific">Escherichia coli O9:H4 (strain HS)</name>
    <dbReference type="NCBI Taxonomy" id="331112"/>
    <lineage>
        <taxon>Bacteria</taxon>
        <taxon>Pseudomonadati</taxon>
        <taxon>Pseudomonadota</taxon>
        <taxon>Gammaproteobacteria</taxon>
        <taxon>Enterobacterales</taxon>
        <taxon>Enterobacteriaceae</taxon>
        <taxon>Escherichia</taxon>
    </lineage>
</organism>
<reference key="1">
    <citation type="journal article" date="2008" name="J. Bacteriol.">
        <title>The pangenome structure of Escherichia coli: comparative genomic analysis of E. coli commensal and pathogenic isolates.</title>
        <authorList>
            <person name="Rasko D.A."/>
            <person name="Rosovitz M.J."/>
            <person name="Myers G.S.A."/>
            <person name="Mongodin E.F."/>
            <person name="Fricke W.F."/>
            <person name="Gajer P."/>
            <person name="Crabtree J."/>
            <person name="Sebaihia M."/>
            <person name="Thomson N.R."/>
            <person name="Chaudhuri R."/>
            <person name="Henderson I.R."/>
            <person name="Sperandio V."/>
            <person name="Ravel J."/>
        </authorList>
    </citation>
    <scope>NUCLEOTIDE SEQUENCE [LARGE SCALE GENOMIC DNA]</scope>
    <source>
        <strain>HS</strain>
    </source>
</reference>
<dbReference type="EMBL" id="CP000802">
    <property type="protein sequence ID" value="ABV08098.1"/>
    <property type="molecule type" value="Genomic_DNA"/>
</dbReference>
<dbReference type="RefSeq" id="WP_001279763.1">
    <property type="nucleotide sequence ID" value="NC_009800.1"/>
</dbReference>
<dbReference type="SMR" id="A8A6E4"/>
<dbReference type="KEGG" id="ecx:EcHS_A3896"/>
<dbReference type="HOGENOM" id="CLU_035023_3_1_6"/>
<dbReference type="GO" id="GO:0005886">
    <property type="term" value="C:plasma membrane"/>
    <property type="evidence" value="ECO:0007669"/>
    <property type="project" value="UniProtKB-SubCell"/>
</dbReference>
<dbReference type="GO" id="GO:0008324">
    <property type="term" value="F:monoatomic cation transmembrane transporter activity"/>
    <property type="evidence" value="ECO:0007669"/>
    <property type="project" value="InterPro"/>
</dbReference>
<dbReference type="GO" id="GO:0006813">
    <property type="term" value="P:potassium ion transport"/>
    <property type="evidence" value="ECO:0007669"/>
    <property type="project" value="InterPro"/>
</dbReference>
<dbReference type="FunFam" id="3.30.70.1450:FF:000004">
    <property type="entry name" value="Putative transport protein YidE"/>
    <property type="match status" value="1"/>
</dbReference>
<dbReference type="Gene3D" id="3.30.70.1450">
    <property type="entry name" value="Regulator of K+ conductance, C-terminal domain"/>
    <property type="match status" value="2"/>
</dbReference>
<dbReference type="HAMAP" id="MF_01016">
    <property type="entry name" value="YidE"/>
    <property type="match status" value="1"/>
</dbReference>
<dbReference type="InterPro" id="IPR050144">
    <property type="entry name" value="AAE_transporter"/>
</dbReference>
<dbReference type="InterPro" id="IPR006037">
    <property type="entry name" value="RCK_C"/>
</dbReference>
<dbReference type="InterPro" id="IPR036721">
    <property type="entry name" value="RCK_C_sf"/>
</dbReference>
<dbReference type="InterPro" id="IPR023018">
    <property type="entry name" value="Transpt_YidE_put"/>
</dbReference>
<dbReference type="InterPro" id="IPR006512">
    <property type="entry name" value="YidE_YbjL"/>
</dbReference>
<dbReference type="NCBIfam" id="NF003007">
    <property type="entry name" value="PRK03818.1"/>
    <property type="match status" value="1"/>
</dbReference>
<dbReference type="NCBIfam" id="TIGR01625">
    <property type="entry name" value="YidE_YbjL_dupl"/>
    <property type="match status" value="2"/>
</dbReference>
<dbReference type="PANTHER" id="PTHR30445">
    <property type="entry name" value="K(+)_H(+) ANTIPORTER SUBUNIT KHTT"/>
    <property type="match status" value="1"/>
</dbReference>
<dbReference type="PANTHER" id="PTHR30445:SF3">
    <property type="entry name" value="TRANSPORT PROTEIN YIDE-RELATED"/>
    <property type="match status" value="1"/>
</dbReference>
<dbReference type="Pfam" id="PF06826">
    <property type="entry name" value="Asp-Al_Ex"/>
    <property type="match status" value="2"/>
</dbReference>
<dbReference type="Pfam" id="PF02080">
    <property type="entry name" value="TrkA_C"/>
    <property type="match status" value="2"/>
</dbReference>
<dbReference type="SUPFAM" id="SSF116726">
    <property type="entry name" value="TrkA C-terminal domain-like"/>
    <property type="match status" value="2"/>
</dbReference>
<dbReference type="PROSITE" id="PS51202">
    <property type="entry name" value="RCK_C"/>
    <property type="match status" value="2"/>
</dbReference>
<keyword id="KW-1003">Cell membrane</keyword>
<keyword id="KW-0472">Membrane</keyword>
<keyword id="KW-0677">Repeat</keyword>
<keyword id="KW-0812">Transmembrane</keyword>
<keyword id="KW-1133">Transmembrane helix</keyword>
<keyword id="KW-0813">Transport</keyword>
<proteinExistence type="inferred from homology"/>
<gene>
    <name evidence="1" type="primary">yidE</name>
    <name type="ordered locus">EcHS_A3896</name>
</gene>
<name>YIDE_ECOHS</name>
<comment type="subcellular location">
    <subcellularLocation>
        <location evidence="1">Cell membrane</location>
        <topology evidence="1">Multi-pass membrane protein</topology>
    </subcellularLocation>
</comment>
<comment type="similarity">
    <text evidence="1">Belongs to the AAE transporter (TC 2.A.81) family. YidE subfamily.</text>
</comment>
<accession>A8A6E4</accession>